<accession>A3N335</accession>
<feature type="chain" id="PRO_1000007963" description="Sugar fermentation stimulation protein homolog">
    <location>
        <begin position="1"/>
        <end position="237"/>
    </location>
</feature>
<gene>
    <name evidence="1" type="primary">sfsA</name>
    <name type="ordered locus">APL_1737</name>
</gene>
<name>SFSA_ACTP2</name>
<keyword id="KW-1185">Reference proteome</keyword>
<evidence type="ECO:0000255" key="1">
    <source>
        <dbReference type="HAMAP-Rule" id="MF_00095"/>
    </source>
</evidence>
<dbReference type="EMBL" id="CP000569">
    <property type="protein sequence ID" value="ABN74821.1"/>
    <property type="molecule type" value="Genomic_DNA"/>
</dbReference>
<dbReference type="RefSeq" id="WP_005618213.1">
    <property type="nucleotide sequence ID" value="NC_009053.1"/>
</dbReference>
<dbReference type="SMR" id="A3N335"/>
<dbReference type="STRING" id="416269.APL_1737"/>
<dbReference type="EnsemblBacteria" id="ABN74821">
    <property type="protein sequence ID" value="ABN74821"/>
    <property type="gene ID" value="APL_1737"/>
</dbReference>
<dbReference type="KEGG" id="apl:APL_1737"/>
<dbReference type="eggNOG" id="COG1489">
    <property type="taxonomic scope" value="Bacteria"/>
</dbReference>
<dbReference type="HOGENOM" id="CLU_052299_2_0_6"/>
<dbReference type="Proteomes" id="UP000001432">
    <property type="component" value="Chromosome"/>
</dbReference>
<dbReference type="GO" id="GO:0003677">
    <property type="term" value="F:DNA binding"/>
    <property type="evidence" value="ECO:0007669"/>
    <property type="project" value="InterPro"/>
</dbReference>
<dbReference type="CDD" id="cd22359">
    <property type="entry name" value="SfsA-like_bacterial"/>
    <property type="match status" value="1"/>
</dbReference>
<dbReference type="FunFam" id="2.40.50.580:FF:000001">
    <property type="entry name" value="Sugar fermentation stimulation protein A"/>
    <property type="match status" value="1"/>
</dbReference>
<dbReference type="FunFam" id="3.40.1350.60:FF:000001">
    <property type="entry name" value="Sugar fermentation stimulation protein A"/>
    <property type="match status" value="1"/>
</dbReference>
<dbReference type="Gene3D" id="2.40.50.580">
    <property type="match status" value="1"/>
</dbReference>
<dbReference type="Gene3D" id="3.40.1350.60">
    <property type="match status" value="1"/>
</dbReference>
<dbReference type="HAMAP" id="MF_00095">
    <property type="entry name" value="SfsA"/>
    <property type="match status" value="1"/>
</dbReference>
<dbReference type="InterPro" id="IPR005224">
    <property type="entry name" value="SfsA"/>
</dbReference>
<dbReference type="InterPro" id="IPR040452">
    <property type="entry name" value="SfsA_C"/>
</dbReference>
<dbReference type="InterPro" id="IPR041465">
    <property type="entry name" value="SfsA_N"/>
</dbReference>
<dbReference type="NCBIfam" id="TIGR00230">
    <property type="entry name" value="sfsA"/>
    <property type="match status" value="1"/>
</dbReference>
<dbReference type="PANTHER" id="PTHR30545">
    <property type="entry name" value="SUGAR FERMENTATION STIMULATION PROTEIN A"/>
    <property type="match status" value="1"/>
</dbReference>
<dbReference type="PANTHER" id="PTHR30545:SF2">
    <property type="entry name" value="SUGAR FERMENTATION STIMULATION PROTEIN A"/>
    <property type="match status" value="1"/>
</dbReference>
<dbReference type="Pfam" id="PF03749">
    <property type="entry name" value="SfsA"/>
    <property type="match status" value="1"/>
</dbReference>
<dbReference type="Pfam" id="PF17746">
    <property type="entry name" value="SfsA_N"/>
    <property type="match status" value="1"/>
</dbReference>
<sequence length="237" mass="26515">MQFPSLSCGILIKRYKRFLADILLPNGEQITLHCPNTGAMTGCATTGDTVWFSTSDNPKRKYAHTWELTQTQAGDFICVNTQRANQLVQEALEKRWIAELAEYQTVLPEQKYGSENSRIDFLLKADNQPDCFAEVKSTTLLTENDLGMFPDAKTERGQKHLRELAAIAESGQQAVILFAILHTGIQRFAVAKQIDPQYAALFEQAKNVGVKVLAYKAQIELVLGKPISMNLQFSCEI</sequence>
<protein>
    <recommendedName>
        <fullName evidence="1">Sugar fermentation stimulation protein homolog</fullName>
    </recommendedName>
</protein>
<proteinExistence type="inferred from homology"/>
<comment type="similarity">
    <text evidence="1">Belongs to the SfsA family.</text>
</comment>
<organism>
    <name type="scientific">Actinobacillus pleuropneumoniae serotype 5b (strain L20)</name>
    <dbReference type="NCBI Taxonomy" id="416269"/>
    <lineage>
        <taxon>Bacteria</taxon>
        <taxon>Pseudomonadati</taxon>
        <taxon>Pseudomonadota</taxon>
        <taxon>Gammaproteobacteria</taxon>
        <taxon>Pasteurellales</taxon>
        <taxon>Pasteurellaceae</taxon>
        <taxon>Actinobacillus</taxon>
    </lineage>
</organism>
<reference key="1">
    <citation type="journal article" date="2008" name="J. Bacteriol.">
        <title>The complete genome sequence of Actinobacillus pleuropneumoniae L20 (serotype 5b).</title>
        <authorList>
            <person name="Foote S.J."/>
            <person name="Bosse J.T."/>
            <person name="Bouevitch A.B."/>
            <person name="Langford P.R."/>
            <person name="Young N.M."/>
            <person name="Nash J.H.E."/>
        </authorList>
    </citation>
    <scope>NUCLEOTIDE SEQUENCE [LARGE SCALE GENOMIC DNA]</scope>
    <source>
        <strain>L20</strain>
    </source>
</reference>